<evidence type="ECO:0000250" key="1"/>
<evidence type="ECO:0000305" key="2"/>
<keyword id="KW-0273">Eye lens protein</keyword>
<name>CROM_NOTSL</name>
<accession>P30842</accession>
<comment type="function">
    <text>Omega-crystallins are structural components of squids and octopi eye lens. Contains relatively little if any DHAL activity.</text>
</comment>
<comment type="tissue specificity">
    <text>Lens.</text>
</comment>
<comment type="similarity">
    <text evidence="2">Belongs to the aldehyde dehydrogenase family.</text>
</comment>
<reference key="1">
    <citation type="journal article" date="1993" name="J. Biol. Chem.">
        <title>Aldehyde dehydrogenase-derived omega-crystallins of squid and octopus. Specialization for lens expression.</title>
        <authorList>
            <person name="Zinovieva R.D."/>
            <person name="Tomarev S.I."/>
            <person name="Piatigorsky J."/>
        </authorList>
    </citation>
    <scope>NUCLEOTIDE SEQUENCE [GENOMIC DNA]</scope>
</reference>
<sequence length="495" mass="56091">MAGIPPPTRNPEIKHNKIFINNQFVNSTSNKAYPVYNPCDNEKVCEVQEGDKSDIDKAVQACKAAFKRGTPWRRMDASRLGHLLYRLADLMERDIAYMASLETMDTGKPYKNSYQDMVHCIQVLRYFAGWADKNMGESIPVDGDFFCYTRNEPVGVCGLLIPYNYPMLMMTWKMAPALACGNCMIVKPAEQTPLTALYCASLIKEAGFPPGVVNVVPGFGKICGQYISSHQEINKVSFTGSTEVGMLVMQDAGKSNLKRCSMQLSGKCPLVVFEDTELDFAVQQAHEAAFQNMGQCRWSGSRTYVHENIYDEFVKRAVEKATSRKTGDPYEMDTEHGPQIDEEQYKKIMEFIKKGKDKGAQLKCGGNRHGDKGFYVEPTVFSDVTDEMKFSQEEIFGPVQLIMKFKDMDEVIDRCNNTDYGMAAAIFTNDINRSITFTHAMYCGTVWVNTYNHWFPQAPFGGYKKSGLYREMGKYTLQEYTEVKNIVYRIPQKNS</sequence>
<organism>
    <name type="scientific">Nototodarus sloanii</name>
    <name type="common">Wellington flying squid</name>
    <name type="synonym">Ommastrephes sloanei</name>
    <dbReference type="NCBI Taxonomy" id="215440"/>
    <lineage>
        <taxon>Eukaryota</taxon>
        <taxon>Metazoa</taxon>
        <taxon>Spiralia</taxon>
        <taxon>Lophotrochozoa</taxon>
        <taxon>Mollusca</taxon>
        <taxon>Cephalopoda</taxon>
        <taxon>Coleoidea</taxon>
        <taxon>Decapodiformes</taxon>
        <taxon>Oegopsida</taxon>
        <taxon>Ommastrephidae</taxon>
        <taxon>Nototodarus</taxon>
    </lineage>
</organism>
<protein>
    <recommendedName>
        <fullName>Omega-crystallin</fullName>
    </recommendedName>
</protein>
<proteinExistence type="evidence at transcript level"/>
<feature type="initiator methionine" description="Removed" evidence="1">
    <location>
        <position position="1"/>
    </location>
</feature>
<feature type="chain" id="PRO_0000056602" description="Omega-crystallin">
    <location>
        <begin position="2"/>
        <end position="495"/>
    </location>
</feature>
<dbReference type="EMBL" id="L06903">
    <property type="protein sequence ID" value="AAA29406.1"/>
    <property type="molecule type" value="Genomic_DNA"/>
</dbReference>
<dbReference type="SMR" id="P30842"/>
<dbReference type="GO" id="GO:0016620">
    <property type="term" value="F:oxidoreductase activity, acting on the aldehyde or oxo group of donors, NAD or NADP as acceptor"/>
    <property type="evidence" value="ECO:0007669"/>
    <property type="project" value="InterPro"/>
</dbReference>
<dbReference type="GO" id="GO:0005212">
    <property type="term" value="F:structural constituent of eye lens"/>
    <property type="evidence" value="ECO:0007669"/>
    <property type="project" value="UniProtKB-KW"/>
</dbReference>
<dbReference type="CDD" id="cd07141">
    <property type="entry name" value="ALDH_F1AB_F2_RALDH1"/>
    <property type="match status" value="1"/>
</dbReference>
<dbReference type="FunFam" id="3.40.605.10:FF:000050">
    <property type="entry name" value="Aldehyde dehydrogenase, mitochondrial"/>
    <property type="match status" value="1"/>
</dbReference>
<dbReference type="FunFam" id="3.40.309.10:FF:000001">
    <property type="entry name" value="Mitochondrial aldehyde dehydrogenase 2"/>
    <property type="match status" value="1"/>
</dbReference>
<dbReference type="Gene3D" id="3.40.605.10">
    <property type="entry name" value="Aldehyde Dehydrogenase, Chain A, domain 1"/>
    <property type="match status" value="1"/>
</dbReference>
<dbReference type="Gene3D" id="3.40.309.10">
    <property type="entry name" value="Aldehyde Dehydrogenase, Chain A, domain 2"/>
    <property type="match status" value="1"/>
</dbReference>
<dbReference type="InterPro" id="IPR016161">
    <property type="entry name" value="Ald_DH/histidinol_DH"/>
</dbReference>
<dbReference type="InterPro" id="IPR016163">
    <property type="entry name" value="Ald_DH_C"/>
</dbReference>
<dbReference type="InterPro" id="IPR016162">
    <property type="entry name" value="Ald_DH_N"/>
</dbReference>
<dbReference type="InterPro" id="IPR015590">
    <property type="entry name" value="Aldehyde_DH_dom"/>
</dbReference>
<dbReference type="PANTHER" id="PTHR11699">
    <property type="entry name" value="ALDEHYDE DEHYDROGENASE-RELATED"/>
    <property type="match status" value="1"/>
</dbReference>
<dbReference type="Pfam" id="PF00171">
    <property type="entry name" value="Aldedh"/>
    <property type="match status" value="1"/>
</dbReference>
<dbReference type="SUPFAM" id="SSF53720">
    <property type="entry name" value="ALDH-like"/>
    <property type="match status" value="1"/>
</dbReference>